<sequence>MLDDRAKLLLKTLVERYIAEGQPVGSRTLSRAPGLDLSPATIRNVMSDLEGLGLITSPHTSAGRIPTARGYRLFVDTMLTAQREHMNAPSHLPPDQPQKVIANAANLLSNLSQFVGVVMTPRRASVFKQIEFLRLSDRRLLVIIVSPDGDVQNRVIFPEADYTQSQLVEASNYINAHYAGLTIEQVRDRLQSEVEKLRGEIAALMQAAVKVSSEVLTEAQEDDVVISGERNLLSVTDFSSDMGQLRRAFELFEQKAQLMRLLDVSSKAEGVRIFIGGESQVVPIEELSIVSANYEVDGQVVGTLGVIGPTRMPYERMIQIVDITSRLVSNALSHRK</sequence>
<reference key="1">
    <citation type="journal article" date="2011" name="J. Bacteriol.">
        <title>Complete genome sequence of the metabolically versatile plant growth-promoting endophyte, Variovorax paradoxus S110.</title>
        <authorList>
            <person name="Han J.I."/>
            <person name="Choi H.K."/>
            <person name="Lee S.W."/>
            <person name="Orwin P.M."/>
            <person name="Kim J."/>
            <person name="Laroe S.L."/>
            <person name="Kim T.G."/>
            <person name="O'Neil J."/>
            <person name="Leadbetter J.R."/>
            <person name="Lee S.Y."/>
            <person name="Hur C.G."/>
            <person name="Spain J.C."/>
            <person name="Ovchinnikova G."/>
            <person name="Goodwin L."/>
            <person name="Han C."/>
        </authorList>
    </citation>
    <scope>NUCLEOTIDE SEQUENCE [LARGE SCALE GENOMIC DNA]</scope>
    <source>
        <strain>S110</strain>
    </source>
</reference>
<protein>
    <recommendedName>
        <fullName evidence="1">Heat-inducible transcription repressor HrcA</fullName>
    </recommendedName>
</protein>
<evidence type="ECO:0000255" key="1">
    <source>
        <dbReference type="HAMAP-Rule" id="MF_00081"/>
    </source>
</evidence>
<proteinExistence type="inferred from homology"/>
<keyword id="KW-0678">Repressor</keyword>
<keyword id="KW-0346">Stress response</keyword>
<keyword id="KW-0804">Transcription</keyword>
<keyword id="KW-0805">Transcription regulation</keyword>
<name>HRCA_VARPS</name>
<accession>C5CYY5</accession>
<organism>
    <name type="scientific">Variovorax paradoxus (strain S110)</name>
    <dbReference type="NCBI Taxonomy" id="543728"/>
    <lineage>
        <taxon>Bacteria</taxon>
        <taxon>Pseudomonadati</taxon>
        <taxon>Pseudomonadota</taxon>
        <taxon>Betaproteobacteria</taxon>
        <taxon>Burkholderiales</taxon>
        <taxon>Comamonadaceae</taxon>
        <taxon>Variovorax</taxon>
    </lineage>
</organism>
<comment type="function">
    <text evidence="1">Negative regulator of class I heat shock genes (grpE-dnaK-dnaJ and groELS operons). Prevents heat-shock induction of these operons.</text>
</comment>
<comment type="similarity">
    <text evidence="1">Belongs to the HrcA family.</text>
</comment>
<gene>
    <name evidence="1" type="primary">hrcA</name>
    <name type="ordered locus">Vapar_4335</name>
</gene>
<feature type="chain" id="PRO_1000202555" description="Heat-inducible transcription repressor HrcA">
    <location>
        <begin position="1"/>
        <end position="336"/>
    </location>
</feature>
<dbReference type="EMBL" id="CP001635">
    <property type="protein sequence ID" value="ACS20946.1"/>
    <property type="molecule type" value="Genomic_DNA"/>
</dbReference>
<dbReference type="SMR" id="C5CYY5"/>
<dbReference type="STRING" id="543728.Vapar_4335"/>
<dbReference type="KEGG" id="vap:Vapar_4335"/>
<dbReference type="eggNOG" id="COG1420">
    <property type="taxonomic scope" value="Bacteria"/>
</dbReference>
<dbReference type="HOGENOM" id="CLU_050019_0_0_4"/>
<dbReference type="OrthoDB" id="9783139at2"/>
<dbReference type="GO" id="GO:0003677">
    <property type="term" value="F:DNA binding"/>
    <property type="evidence" value="ECO:0007669"/>
    <property type="project" value="InterPro"/>
</dbReference>
<dbReference type="GO" id="GO:0045892">
    <property type="term" value="P:negative regulation of DNA-templated transcription"/>
    <property type="evidence" value="ECO:0007669"/>
    <property type="project" value="UniProtKB-UniRule"/>
</dbReference>
<dbReference type="Gene3D" id="3.30.450.40">
    <property type="match status" value="1"/>
</dbReference>
<dbReference type="Gene3D" id="1.10.10.10">
    <property type="entry name" value="Winged helix-like DNA-binding domain superfamily/Winged helix DNA-binding domain"/>
    <property type="match status" value="1"/>
</dbReference>
<dbReference type="HAMAP" id="MF_00081">
    <property type="entry name" value="HrcA"/>
    <property type="match status" value="1"/>
</dbReference>
<dbReference type="InterPro" id="IPR029016">
    <property type="entry name" value="GAF-like_dom_sf"/>
</dbReference>
<dbReference type="InterPro" id="IPR002571">
    <property type="entry name" value="HrcA"/>
</dbReference>
<dbReference type="InterPro" id="IPR021153">
    <property type="entry name" value="HrcA_C"/>
</dbReference>
<dbReference type="InterPro" id="IPR036388">
    <property type="entry name" value="WH-like_DNA-bd_sf"/>
</dbReference>
<dbReference type="InterPro" id="IPR036390">
    <property type="entry name" value="WH_DNA-bd_sf"/>
</dbReference>
<dbReference type="InterPro" id="IPR005104">
    <property type="entry name" value="WHTH_HrcA_DNA-bd"/>
</dbReference>
<dbReference type="NCBIfam" id="TIGR00331">
    <property type="entry name" value="hrcA"/>
    <property type="match status" value="1"/>
</dbReference>
<dbReference type="PANTHER" id="PTHR34824">
    <property type="entry name" value="HEAT-INDUCIBLE TRANSCRIPTION REPRESSOR HRCA"/>
    <property type="match status" value="1"/>
</dbReference>
<dbReference type="PANTHER" id="PTHR34824:SF1">
    <property type="entry name" value="HEAT-INDUCIBLE TRANSCRIPTION REPRESSOR HRCA"/>
    <property type="match status" value="1"/>
</dbReference>
<dbReference type="Pfam" id="PF01628">
    <property type="entry name" value="HrcA"/>
    <property type="match status" value="1"/>
</dbReference>
<dbReference type="Pfam" id="PF03444">
    <property type="entry name" value="HrcA_DNA-bdg"/>
    <property type="match status" value="1"/>
</dbReference>
<dbReference type="PIRSF" id="PIRSF005485">
    <property type="entry name" value="HrcA"/>
    <property type="match status" value="1"/>
</dbReference>
<dbReference type="SUPFAM" id="SSF55781">
    <property type="entry name" value="GAF domain-like"/>
    <property type="match status" value="1"/>
</dbReference>
<dbReference type="SUPFAM" id="SSF46785">
    <property type="entry name" value="Winged helix' DNA-binding domain"/>
    <property type="match status" value="1"/>
</dbReference>